<organism>
    <name type="scientific">Pyrobaculum arsenaticum (strain DSM 13514 / JCM 11321 / PZ6)</name>
    <dbReference type="NCBI Taxonomy" id="340102"/>
    <lineage>
        <taxon>Archaea</taxon>
        <taxon>Thermoproteota</taxon>
        <taxon>Thermoprotei</taxon>
        <taxon>Thermoproteales</taxon>
        <taxon>Thermoproteaceae</taxon>
        <taxon>Pyrobaculum</taxon>
    </lineage>
</organism>
<gene>
    <name evidence="1" type="primary">pfdA</name>
    <name type="ordered locus">Pars_1606</name>
</gene>
<comment type="function">
    <text evidence="1">Molecular chaperone capable of stabilizing a range of proteins. Seems to fulfill an ATP-independent, HSP70-like function in archaeal de novo protein folding.</text>
</comment>
<comment type="subunit">
    <text evidence="1">Heterohexamer of two alpha and four beta subunits.</text>
</comment>
<comment type="subcellular location">
    <subcellularLocation>
        <location evidence="1">Cytoplasm</location>
    </subcellularLocation>
</comment>
<comment type="similarity">
    <text evidence="2">Belongs to the prefoldin subunit alpha family.</text>
</comment>
<protein>
    <recommendedName>
        <fullName evidence="1">Prefoldin subunit alpha</fullName>
    </recommendedName>
    <alternativeName>
        <fullName evidence="1">GimC subunit alpha</fullName>
    </alternativeName>
</protein>
<keyword id="KW-0143">Chaperone</keyword>
<keyword id="KW-0963">Cytoplasm</keyword>
<evidence type="ECO:0000255" key="1">
    <source>
        <dbReference type="HAMAP-Rule" id="MF_00308"/>
    </source>
</evidence>
<evidence type="ECO:0000305" key="2"/>
<feature type="chain" id="PRO_0000300769" description="Prefoldin subunit alpha">
    <location>
        <begin position="1"/>
        <end position="136"/>
    </location>
</feature>
<sequence length="136" mass="15351">MSRQDVRQEIQRLIEEYQLVGELLTNLQAQHATVSELLEELTTALDGVRLLKGGAGERLVHIGAGLFVKGVFETKEVLTPLGAGYHAFLDLDNAERVLQERIEEYSRLKTSLEENIGKLAERAEQIRQVLERLGIR</sequence>
<reference key="1">
    <citation type="submission" date="2007-04" db="EMBL/GenBank/DDBJ databases">
        <title>Complete sequence of Pyrobaculum arsenaticum DSM 13514.</title>
        <authorList>
            <consortium name="US DOE Joint Genome Institute"/>
            <person name="Copeland A."/>
            <person name="Lucas S."/>
            <person name="Lapidus A."/>
            <person name="Barry K."/>
            <person name="Glavina del Rio T."/>
            <person name="Dalin E."/>
            <person name="Tice H."/>
            <person name="Pitluck S."/>
            <person name="Chain P."/>
            <person name="Malfatti S."/>
            <person name="Shin M."/>
            <person name="Vergez L."/>
            <person name="Schmutz J."/>
            <person name="Larimer F."/>
            <person name="Land M."/>
            <person name="Hauser L."/>
            <person name="Kyrpides N."/>
            <person name="Mikhailova N."/>
            <person name="Cozen A.E."/>
            <person name="Fitz-Gibbon S.T."/>
            <person name="House C.H."/>
            <person name="Saltikov C."/>
            <person name="Lowe T.M."/>
            <person name="Richardson P."/>
        </authorList>
    </citation>
    <scope>NUCLEOTIDE SEQUENCE [LARGE SCALE GENOMIC DNA]</scope>
    <source>
        <strain>ATCC 700994 / DSM 13514 / JCM 11321 / PZ6</strain>
    </source>
</reference>
<accession>A4WL93</accession>
<name>PFDA_PYRAR</name>
<dbReference type="EMBL" id="CP000660">
    <property type="protein sequence ID" value="ABP51160.1"/>
    <property type="molecule type" value="Genomic_DNA"/>
</dbReference>
<dbReference type="SMR" id="A4WL93"/>
<dbReference type="STRING" id="340102.Pars_1606"/>
<dbReference type="KEGG" id="pas:Pars_1606"/>
<dbReference type="HOGENOM" id="CLU_1912415_0_0_2"/>
<dbReference type="OrthoDB" id="27425at2157"/>
<dbReference type="PhylomeDB" id="A4WL93"/>
<dbReference type="Proteomes" id="UP000001567">
    <property type="component" value="Chromosome"/>
</dbReference>
<dbReference type="GO" id="GO:0005737">
    <property type="term" value="C:cytoplasm"/>
    <property type="evidence" value="ECO:0007669"/>
    <property type="project" value="UniProtKB-SubCell"/>
</dbReference>
<dbReference type="GO" id="GO:0016272">
    <property type="term" value="C:prefoldin complex"/>
    <property type="evidence" value="ECO:0007669"/>
    <property type="project" value="UniProtKB-UniRule"/>
</dbReference>
<dbReference type="GO" id="GO:0051082">
    <property type="term" value="F:unfolded protein binding"/>
    <property type="evidence" value="ECO:0007669"/>
    <property type="project" value="UniProtKB-UniRule"/>
</dbReference>
<dbReference type="GO" id="GO:0006457">
    <property type="term" value="P:protein folding"/>
    <property type="evidence" value="ECO:0007669"/>
    <property type="project" value="UniProtKB-UniRule"/>
</dbReference>
<dbReference type="CDD" id="cd23160">
    <property type="entry name" value="Prefoldin_alpha_GimC"/>
    <property type="match status" value="1"/>
</dbReference>
<dbReference type="Gene3D" id="1.10.287.370">
    <property type="match status" value="1"/>
</dbReference>
<dbReference type="HAMAP" id="MF_00308">
    <property type="entry name" value="PfdA"/>
    <property type="match status" value="1"/>
</dbReference>
<dbReference type="InterPro" id="IPR011599">
    <property type="entry name" value="PFD_alpha_archaea"/>
</dbReference>
<dbReference type="InterPro" id="IPR009053">
    <property type="entry name" value="Prefoldin"/>
</dbReference>
<dbReference type="InterPro" id="IPR004127">
    <property type="entry name" value="Prefoldin_subunit_alpha"/>
</dbReference>
<dbReference type="NCBIfam" id="TIGR00293">
    <property type="entry name" value="prefoldin subunit alpha"/>
    <property type="match status" value="1"/>
</dbReference>
<dbReference type="Pfam" id="PF02996">
    <property type="entry name" value="Prefoldin"/>
    <property type="match status" value="1"/>
</dbReference>
<dbReference type="SUPFAM" id="SSF46579">
    <property type="entry name" value="Prefoldin"/>
    <property type="match status" value="1"/>
</dbReference>
<proteinExistence type="inferred from homology"/>